<keyword id="KW-0028">Amino-acid biosynthesis</keyword>
<keyword id="KW-0067">ATP-binding</keyword>
<keyword id="KW-0963">Cytoplasm</keyword>
<keyword id="KW-0328">Glycosyltransferase</keyword>
<keyword id="KW-0368">Histidine biosynthesis</keyword>
<keyword id="KW-0547">Nucleotide-binding</keyword>
<keyword id="KW-1185">Reference proteome</keyword>
<keyword id="KW-0808">Transferase</keyword>
<feature type="chain" id="PRO_0000229316" description="ATP phosphoribosyltransferase">
    <location>
        <begin position="1"/>
        <end position="212"/>
    </location>
</feature>
<proteinExistence type="inferred from homology"/>
<sequence>MSDFLTIAIPKGRILEESVALFGKIGIHCDELLSNTRKLIFENREQRMRYMIVRATDVPTYVEYGCADLGIVGKDTLMEQEKDLYEPLDLKFGYCRMMVAEPAGLARDDDPSSWSNIRIATKYPNVTEKYFAKKGVQVEIIKLYGSIELAPLVGLSERIVDLVSTGETLRQNGLVEVETIAEITTRLIVNRASLKTKHPRITEIIEGLEKHV</sequence>
<comment type="function">
    <text evidence="1">Catalyzes the condensation of ATP and 5-phosphoribose 1-diphosphate to form N'-(5'-phosphoribosyl)-ATP (PR-ATP). Has a crucial role in the pathway because the rate of histidine biosynthesis seems to be controlled primarily by regulation of HisG enzymatic activity.</text>
</comment>
<comment type="catalytic activity">
    <reaction evidence="1">
        <text>1-(5-phospho-beta-D-ribosyl)-ATP + diphosphate = 5-phospho-alpha-D-ribose 1-diphosphate + ATP</text>
        <dbReference type="Rhea" id="RHEA:18473"/>
        <dbReference type="ChEBI" id="CHEBI:30616"/>
        <dbReference type="ChEBI" id="CHEBI:33019"/>
        <dbReference type="ChEBI" id="CHEBI:58017"/>
        <dbReference type="ChEBI" id="CHEBI:73183"/>
        <dbReference type="EC" id="2.4.2.17"/>
    </reaction>
</comment>
<comment type="pathway">
    <text evidence="1">Amino-acid biosynthesis; L-histidine biosynthesis; L-histidine from 5-phospho-alpha-D-ribose 1-diphosphate: step 1/9.</text>
</comment>
<comment type="subunit">
    <text evidence="1">Heteromultimer composed of HisG and HisZ subunits.</text>
</comment>
<comment type="subcellular location">
    <subcellularLocation>
        <location evidence="1">Cytoplasm</location>
    </subcellularLocation>
</comment>
<comment type="domain">
    <text>Lacks the C-terminal regulatory region which is replaced by HisZ.</text>
</comment>
<comment type="similarity">
    <text evidence="1">Belongs to the ATP phosphoribosyltransferase family. Short subfamily.</text>
</comment>
<organism>
    <name type="scientific">Geobacter metallireducens (strain ATCC 53774 / DSM 7210 / GS-15)</name>
    <dbReference type="NCBI Taxonomy" id="269799"/>
    <lineage>
        <taxon>Bacteria</taxon>
        <taxon>Pseudomonadati</taxon>
        <taxon>Thermodesulfobacteriota</taxon>
        <taxon>Desulfuromonadia</taxon>
        <taxon>Geobacterales</taxon>
        <taxon>Geobacteraceae</taxon>
        <taxon>Geobacter</taxon>
    </lineage>
</organism>
<gene>
    <name evidence="1" type="primary">hisG</name>
    <name type="ordered locus">Gmet_0383</name>
</gene>
<dbReference type="EC" id="2.4.2.17" evidence="1"/>
<dbReference type="EMBL" id="CP000148">
    <property type="protein sequence ID" value="ABB30626.1"/>
    <property type="molecule type" value="Genomic_DNA"/>
</dbReference>
<dbReference type="RefSeq" id="WP_004512355.1">
    <property type="nucleotide sequence ID" value="NC_007517.1"/>
</dbReference>
<dbReference type="SMR" id="Q39YP8"/>
<dbReference type="STRING" id="269799.Gmet_0383"/>
<dbReference type="KEGG" id="gme:Gmet_0383"/>
<dbReference type="eggNOG" id="COG0040">
    <property type="taxonomic scope" value="Bacteria"/>
</dbReference>
<dbReference type="HOGENOM" id="CLU_038115_2_0_7"/>
<dbReference type="UniPathway" id="UPA00031">
    <property type="reaction ID" value="UER00006"/>
</dbReference>
<dbReference type="Proteomes" id="UP000007073">
    <property type="component" value="Chromosome"/>
</dbReference>
<dbReference type="GO" id="GO:0005737">
    <property type="term" value="C:cytoplasm"/>
    <property type="evidence" value="ECO:0007669"/>
    <property type="project" value="UniProtKB-SubCell"/>
</dbReference>
<dbReference type="GO" id="GO:0005524">
    <property type="term" value="F:ATP binding"/>
    <property type="evidence" value="ECO:0007669"/>
    <property type="project" value="UniProtKB-KW"/>
</dbReference>
<dbReference type="GO" id="GO:0003879">
    <property type="term" value="F:ATP phosphoribosyltransferase activity"/>
    <property type="evidence" value="ECO:0007669"/>
    <property type="project" value="UniProtKB-UniRule"/>
</dbReference>
<dbReference type="GO" id="GO:0000105">
    <property type="term" value="P:L-histidine biosynthetic process"/>
    <property type="evidence" value="ECO:0007669"/>
    <property type="project" value="UniProtKB-UniRule"/>
</dbReference>
<dbReference type="CDD" id="cd13595">
    <property type="entry name" value="PBP2_HisGs"/>
    <property type="match status" value="1"/>
</dbReference>
<dbReference type="FunFam" id="3.40.190.10:FF:000011">
    <property type="entry name" value="ATP phosphoribosyltransferase"/>
    <property type="match status" value="1"/>
</dbReference>
<dbReference type="Gene3D" id="3.40.190.10">
    <property type="entry name" value="Periplasmic binding protein-like II"/>
    <property type="match status" value="2"/>
</dbReference>
<dbReference type="HAMAP" id="MF_01018">
    <property type="entry name" value="HisG_Short"/>
    <property type="match status" value="1"/>
</dbReference>
<dbReference type="InterPro" id="IPR013820">
    <property type="entry name" value="ATP_PRibTrfase_cat"/>
</dbReference>
<dbReference type="InterPro" id="IPR018198">
    <property type="entry name" value="ATP_PRibTrfase_CS"/>
</dbReference>
<dbReference type="InterPro" id="IPR001348">
    <property type="entry name" value="ATP_PRibTrfase_HisG"/>
</dbReference>
<dbReference type="InterPro" id="IPR024893">
    <property type="entry name" value="ATP_PRibTrfase_HisG_short"/>
</dbReference>
<dbReference type="NCBIfam" id="TIGR00070">
    <property type="entry name" value="hisG"/>
    <property type="match status" value="1"/>
</dbReference>
<dbReference type="PANTHER" id="PTHR21403:SF8">
    <property type="entry name" value="ATP PHOSPHORIBOSYLTRANSFERASE"/>
    <property type="match status" value="1"/>
</dbReference>
<dbReference type="PANTHER" id="PTHR21403">
    <property type="entry name" value="ATP PHOSPHORIBOSYLTRANSFERASE ATP-PRTASE"/>
    <property type="match status" value="1"/>
</dbReference>
<dbReference type="Pfam" id="PF01634">
    <property type="entry name" value="HisG"/>
    <property type="match status" value="1"/>
</dbReference>
<dbReference type="SUPFAM" id="SSF53850">
    <property type="entry name" value="Periplasmic binding protein-like II"/>
    <property type="match status" value="1"/>
</dbReference>
<dbReference type="PROSITE" id="PS01316">
    <property type="entry name" value="ATP_P_PHORIBOSYLTR"/>
    <property type="match status" value="1"/>
</dbReference>
<reference key="1">
    <citation type="journal article" date="2009" name="BMC Microbiol.">
        <title>The genome sequence of Geobacter metallireducens: features of metabolism, physiology and regulation common and dissimilar to Geobacter sulfurreducens.</title>
        <authorList>
            <person name="Aklujkar M."/>
            <person name="Krushkal J."/>
            <person name="DiBartolo G."/>
            <person name="Lapidus A."/>
            <person name="Land M.L."/>
            <person name="Lovley D.R."/>
        </authorList>
    </citation>
    <scope>NUCLEOTIDE SEQUENCE [LARGE SCALE GENOMIC DNA]</scope>
    <source>
        <strain>ATCC 53774 / DSM 7210 / GS-15</strain>
    </source>
</reference>
<protein>
    <recommendedName>
        <fullName evidence="1">ATP phosphoribosyltransferase</fullName>
        <shortName evidence="1">ATP-PRT</shortName>
        <shortName evidence="1">ATP-PRTase</shortName>
        <ecNumber evidence="1">2.4.2.17</ecNumber>
    </recommendedName>
</protein>
<accession>Q39YP8</accession>
<name>HIS1_GEOMG</name>
<evidence type="ECO:0000255" key="1">
    <source>
        <dbReference type="HAMAP-Rule" id="MF_01018"/>
    </source>
</evidence>